<protein>
    <recommendedName>
        <fullName>Alpha-1,4 glucan phosphorylase L-2 isozyme, chloroplastic/amyloplastic</fullName>
        <ecNumber>2.4.1.1</ecNumber>
    </recommendedName>
    <alternativeName>
        <fullName>Starch phosphorylase L-2</fullName>
    </alternativeName>
</protein>
<accession>P53535</accession>
<evidence type="ECO:0000250" key="1"/>
<evidence type="ECO:0000255" key="2"/>
<evidence type="ECO:0000256" key="3">
    <source>
        <dbReference type="SAM" id="MobiDB-lite"/>
    </source>
</evidence>
<evidence type="ECO:0000305" key="4"/>
<sequence>MATFAVSGLNSISSISSFNNNFRSKNSNILLSRRRILLFSFRRRRRSFSVSSVASDQKQKTKDSSSDEGFTLDVFQPDSTSVLSSIKYHAEFTPSFSPEKFELPKAYYATAESVRDTLIINWNATYEFYEKMNVKQAYYLSMEFLQGRALLNAIGNLGLTGPYADALTKLGYSLEDVARQEPDAALGNGGLGRLASCFLDSMATLNYPAWGYGLRYQYGLFKQLITKDGQEEVAENWLEMGNPWEIVRNDISYPVKFYGKVIEGADGRKEWAGGEDITAVAYDVPIPGYKTKTTINLRLWTTKLAAEAFDLYAFNNGDHAKAYEAQKKAEKICYVLYPGDESLEGKTLRLKQQYTLCSASLQDIIARFEKRSGNAVNWDQFPEKVAVQMNDTHPTLCIPELLRILMDVKGLSWKQAWEITQRTVAYTNHTVLPEALEKWSFTLLGELLPRHVEIIAMIDEELLHTILAEYGTEDLDLLQEKLNQMRILDNVEIPSSVLELLIKAEESAADVEKAADEEQEEEGKDDSKDEETEAVKAETTNEEEETEVKKVEVEDSQAKIKRIFGPHPNKPQVVHMANLCVVSGHAVNGVAEIHSEIVKDEVFNEFYKLWPEKFQNKTNGVTPRRWLSFCNPELSEIITKWTGSDDWLVNTEKLAELRKFADNEELQSEWRKAKGNNKMKIVSLIKEKTGYVVSPDAMFDVQIKRIHEYKRQLLNIFGIVYRYKKMKEMSPEERKEKFVPRVCIFGGKAFATYVQAKRIVKFITDVGETVNHDPEIGDLLKVVFVPDYNVSVAEVLIPGSELSQHISTAGMEASGTSNMKFSMNGCLLIGTLDGANVEIREEVGEDNFFLFGAQAHEIAGLRKERAEGKFVPDPRFEEVKAFIRTGVFGTYNYEELMGSLEGNEGYGRADYFLVGKDFPDYIECQDKVDEAYRDQKKWTKMSILNTAGSFKFSSDRTIHQYARDIWRIEPVELP</sequence>
<proteinExistence type="evidence at protein level"/>
<organism>
    <name type="scientific">Solanum tuberosum</name>
    <name type="common">Potato</name>
    <dbReference type="NCBI Taxonomy" id="4113"/>
    <lineage>
        <taxon>Eukaryota</taxon>
        <taxon>Viridiplantae</taxon>
        <taxon>Streptophyta</taxon>
        <taxon>Embryophyta</taxon>
        <taxon>Tracheophyta</taxon>
        <taxon>Spermatophyta</taxon>
        <taxon>Magnoliopsida</taxon>
        <taxon>eudicotyledons</taxon>
        <taxon>Gunneridae</taxon>
        <taxon>Pentapetalae</taxon>
        <taxon>asterids</taxon>
        <taxon>lamiids</taxon>
        <taxon>Solanales</taxon>
        <taxon>Solanaceae</taxon>
        <taxon>Solanoideae</taxon>
        <taxon>Solaneae</taxon>
        <taxon>Solanum</taxon>
    </lineage>
</organism>
<name>PHSL2_SOLTU</name>
<dbReference type="EC" id="2.4.1.1"/>
<dbReference type="EMBL" id="X73684">
    <property type="protein sequence ID" value="CAA52036.1"/>
    <property type="molecule type" value="mRNA"/>
</dbReference>
<dbReference type="PIR" id="S53489">
    <property type="entry name" value="S34189"/>
</dbReference>
<dbReference type="RefSeq" id="NP_001275128.1">
    <property type="nucleotide sequence ID" value="NM_001288199.1"/>
</dbReference>
<dbReference type="SMR" id="P53535"/>
<dbReference type="IntAct" id="P53535">
    <property type="interactions" value="1"/>
</dbReference>
<dbReference type="STRING" id="4113.P53535"/>
<dbReference type="CAZy" id="GT35">
    <property type="family name" value="Glycosyltransferase Family 35"/>
</dbReference>
<dbReference type="PaxDb" id="4113-PGSC0003DMT400072963"/>
<dbReference type="GeneID" id="102603391"/>
<dbReference type="KEGG" id="sot:102603391"/>
<dbReference type="eggNOG" id="KOG2099">
    <property type="taxonomic scope" value="Eukaryota"/>
</dbReference>
<dbReference type="InParanoid" id="P53535"/>
<dbReference type="OrthoDB" id="9215500at2759"/>
<dbReference type="Proteomes" id="UP000011115">
    <property type="component" value="Unassembled WGS sequence"/>
</dbReference>
<dbReference type="ExpressionAtlas" id="P53535">
    <property type="expression patterns" value="baseline and differential"/>
</dbReference>
<dbReference type="GO" id="GO:0009501">
    <property type="term" value="C:amyloplast"/>
    <property type="evidence" value="ECO:0007669"/>
    <property type="project" value="UniProtKB-SubCell"/>
</dbReference>
<dbReference type="GO" id="GO:0009507">
    <property type="term" value="C:chloroplast"/>
    <property type="evidence" value="ECO:0007669"/>
    <property type="project" value="UniProtKB-SubCell"/>
</dbReference>
<dbReference type="GO" id="GO:0005737">
    <property type="term" value="C:cytoplasm"/>
    <property type="evidence" value="ECO:0000318"/>
    <property type="project" value="GO_Central"/>
</dbReference>
<dbReference type="GO" id="GO:0008184">
    <property type="term" value="F:glycogen phosphorylase activity"/>
    <property type="evidence" value="ECO:0000318"/>
    <property type="project" value="GO_Central"/>
</dbReference>
<dbReference type="GO" id="GO:0030170">
    <property type="term" value="F:pyridoxal phosphate binding"/>
    <property type="evidence" value="ECO:0000318"/>
    <property type="project" value="GO_Central"/>
</dbReference>
<dbReference type="GO" id="GO:0005980">
    <property type="term" value="P:glycogen catabolic process"/>
    <property type="evidence" value="ECO:0000318"/>
    <property type="project" value="GO_Central"/>
</dbReference>
<dbReference type="CDD" id="cd04300">
    <property type="entry name" value="GT35_Glycogen_Phosphorylase"/>
    <property type="match status" value="1"/>
</dbReference>
<dbReference type="FunFam" id="3.40.50.2000:FF:000003">
    <property type="entry name" value="Alpha-1,4 glucan phosphorylase"/>
    <property type="match status" value="1"/>
</dbReference>
<dbReference type="FunFam" id="3.40.50.2000:FF:000105">
    <property type="entry name" value="Alpha-1,4 glucan phosphorylase"/>
    <property type="match status" value="1"/>
</dbReference>
<dbReference type="Gene3D" id="3.40.50.2000">
    <property type="entry name" value="Glycogen Phosphorylase B"/>
    <property type="match status" value="3"/>
</dbReference>
<dbReference type="InterPro" id="IPR011833">
    <property type="entry name" value="Glycg_phsphrylas"/>
</dbReference>
<dbReference type="InterPro" id="IPR000811">
    <property type="entry name" value="Glyco_trans_35"/>
</dbReference>
<dbReference type="InterPro" id="IPR035090">
    <property type="entry name" value="Pyridoxal_P_attach_site"/>
</dbReference>
<dbReference type="NCBIfam" id="TIGR02093">
    <property type="entry name" value="P_ylase"/>
    <property type="match status" value="1"/>
</dbReference>
<dbReference type="PANTHER" id="PTHR11468:SF27">
    <property type="entry name" value="ALPHA-1,4 GLUCAN PHOSPHORYLASE L-2 ISOZYME, CHLOROPLASTIC_AMYLOPLASTIC"/>
    <property type="match status" value="1"/>
</dbReference>
<dbReference type="PANTHER" id="PTHR11468">
    <property type="entry name" value="GLYCOGEN PHOSPHORYLASE"/>
    <property type="match status" value="1"/>
</dbReference>
<dbReference type="Pfam" id="PF00343">
    <property type="entry name" value="Phosphorylase"/>
    <property type="match status" value="2"/>
</dbReference>
<dbReference type="PIRSF" id="PIRSF000460">
    <property type="entry name" value="Pprylas_GlgP"/>
    <property type="match status" value="1"/>
</dbReference>
<dbReference type="SUPFAM" id="SSF53756">
    <property type="entry name" value="UDP-Glycosyltransferase/glycogen phosphorylase"/>
    <property type="match status" value="2"/>
</dbReference>
<dbReference type="PROSITE" id="PS00102">
    <property type="entry name" value="PHOSPHORYLASE"/>
    <property type="match status" value="1"/>
</dbReference>
<comment type="function">
    <text>Phosphorylase is an important allosteric enzyme in carbohydrate metabolism. Enzymes from different sources differ in their regulatory mechanisms and in their natural substrates. However, all known phosphorylases share catalytic and structural properties.</text>
</comment>
<comment type="catalytic activity">
    <reaction>
        <text>[(1-&gt;4)-alpha-D-glucosyl](n) + phosphate = [(1-&gt;4)-alpha-D-glucosyl](n-1) + alpha-D-glucose 1-phosphate</text>
        <dbReference type="Rhea" id="RHEA:41732"/>
        <dbReference type="Rhea" id="RHEA-COMP:9584"/>
        <dbReference type="Rhea" id="RHEA-COMP:9586"/>
        <dbReference type="ChEBI" id="CHEBI:15444"/>
        <dbReference type="ChEBI" id="CHEBI:43474"/>
        <dbReference type="ChEBI" id="CHEBI:58601"/>
        <dbReference type="EC" id="2.4.1.1"/>
    </reaction>
</comment>
<comment type="cofactor">
    <cofactor>
        <name>pyridoxal 5'-phosphate</name>
        <dbReference type="ChEBI" id="CHEBI:597326"/>
    </cofactor>
</comment>
<comment type="interaction">
    <interactant intactId="EBI-780968">
        <id>P53535</id>
    </interactant>
    <interactant intactId="EBI-780963">
        <id>P04045</id>
    </interactant>
    <organismsDiffer>false</organismsDiffer>
    <experiments>2</experiments>
</comment>
<comment type="subcellular location">
    <subcellularLocation>
        <location>Plastid</location>
        <location>Chloroplast</location>
    </subcellularLocation>
    <subcellularLocation>
        <location>Plastid</location>
        <location>Amyloplast</location>
    </subcellularLocation>
</comment>
<comment type="tissue specificity">
    <text>Leaves.</text>
</comment>
<comment type="similarity">
    <text evidence="4">Belongs to the glycogen phosphorylase family.</text>
</comment>
<keyword id="KW-0021">Allosteric enzyme</keyword>
<keyword id="KW-0035">Amyloplast</keyword>
<keyword id="KW-0119">Carbohydrate metabolism</keyword>
<keyword id="KW-0150">Chloroplast</keyword>
<keyword id="KW-0328">Glycosyltransferase</keyword>
<keyword id="KW-0934">Plastid</keyword>
<keyword id="KW-0663">Pyridoxal phosphate</keyword>
<keyword id="KW-1185">Reference proteome</keyword>
<keyword id="KW-0808">Transferase</keyword>
<keyword id="KW-0809">Transit peptide</keyword>
<reference key="1">
    <citation type="journal article" date="1995" name="Plant Mol. Biol.">
        <title>A second L-type isozyme of potato glucan phosphorylase: cloning, antisense inhibition and expression analysis.</title>
        <authorList>
            <person name="Sonnewald U."/>
            <person name="Basner A."/>
            <person name="Greve B."/>
            <person name="Steup M."/>
        </authorList>
    </citation>
    <scope>NUCLEOTIDE SEQUENCE [MRNA]</scope>
    <source>
        <strain>cv. Desiree</strain>
        <tissue>Leaf</tissue>
    </source>
</reference>
<gene>
    <name type="primary">STP-1</name>
</gene>
<feature type="transit peptide" description="Chloroplast" evidence="2">
    <location>
        <begin position="1"/>
        <end position="81"/>
    </location>
</feature>
<feature type="chain" id="PRO_0000012293" description="Alpha-1,4 glucan phosphorylase L-2 isozyme, chloroplastic/amyloplastic">
    <location>
        <begin position="82"/>
        <end position="974"/>
    </location>
</feature>
<feature type="region of interest" description="Disordered" evidence="3">
    <location>
        <begin position="509"/>
        <end position="551"/>
    </location>
</feature>
<feature type="compositionally biased region" description="Acidic residues" evidence="3">
    <location>
        <begin position="517"/>
        <end position="532"/>
    </location>
</feature>
<feature type="modified residue" description="N6-(pyridoxal phosphate)lysine" evidence="1">
    <location>
        <position position="820"/>
    </location>
</feature>